<name>UVRC_MESFL</name>
<sequence length="588" mass="68928">MELKNKVSNLPSKPGCYLYLNKDKHVIYVGKAKNLKKRVSSYFDRAQNLKTTRLVREIADLEYFVVSNEKESLLLEENLIKKYRPKYNVLLNDDKAYPYIIITNEKDPTYKYVRKLDKKAFRSFGPLPIGSNARETLITLQRLFPLRRCKGNLGKPCLHYFIGQCSGACFKEVNKEYYQEQIKRVDNFFKGNINEVKTLLTNQMHKAAENLQFEEAQRIKEQIISLDFTTTKQNVEFKSQTDVDVISYFIEDEKIAIVTLFYRSGKLLFKDEHIQLYFEQDITDLIDSFMSQIYDKNILPDKIIVDNEVELFDLNEKYKSISTHPIKEDEKIIYKLATENAQEAIRKSKISTTINIGNENELLLELQEKANLQKEPYRLEMFDISNIGNEFIVGSCVVYINGKPARNEFRKYNIESKFTSDYDRLKEMLYRRFQKALIEKRMLPDLIIMDGGIIQIHAAKEIINALGLSEIQVIGLVKDEHHNTSFLIDTNEEQVIIKDKPKLFNWLSSIQVRVDEYAKSGFRKKQNNSFLKSDLEQIEGLGKKRIQDLFKKFNTINEIESADQEELFKILKNKKALDNLNIYLKNRK</sequence>
<reference key="1">
    <citation type="submission" date="2004-06" db="EMBL/GenBank/DDBJ databases">
        <authorList>
            <person name="Birren B.W."/>
            <person name="Stange-Thomann N."/>
            <person name="Hafez N."/>
            <person name="DeCaprio D."/>
            <person name="Fisher S."/>
            <person name="Butler J."/>
            <person name="Elkins T."/>
            <person name="Kodira C.D."/>
            <person name="Major J."/>
            <person name="Wang S."/>
            <person name="Nicol R."/>
            <person name="Nusbaum C."/>
        </authorList>
    </citation>
    <scope>NUCLEOTIDE SEQUENCE [LARGE SCALE GENOMIC DNA]</scope>
    <source>
        <strain>ATCC 33453 / NBRC 100688 / NCTC 11704 / L1</strain>
    </source>
</reference>
<accession>Q6F216</accession>
<evidence type="ECO:0000255" key="1">
    <source>
        <dbReference type="HAMAP-Rule" id="MF_00203"/>
    </source>
</evidence>
<gene>
    <name evidence="1" type="primary">uvrC</name>
    <name type="ordered locus">Mfl101</name>
</gene>
<organism>
    <name type="scientific">Mesoplasma florum (strain ATCC 33453 / NBRC 100688 / NCTC 11704 / L1)</name>
    <name type="common">Acholeplasma florum</name>
    <dbReference type="NCBI Taxonomy" id="265311"/>
    <lineage>
        <taxon>Bacteria</taxon>
        <taxon>Bacillati</taxon>
        <taxon>Mycoplasmatota</taxon>
        <taxon>Mollicutes</taxon>
        <taxon>Entomoplasmatales</taxon>
        <taxon>Entomoplasmataceae</taxon>
        <taxon>Mesoplasma</taxon>
    </lineage>
</organism>
<proteinExistence type="inferred from homology"/>
<feature type="chain" id="PRO_0000227444" description="UvrABC system protein C">
    <location>
        <begin position="1"/>
        <end position="588"/>
    </location>
</feature>
<feature type="domain" description="GIY-YIG" evidence="1">
    <location>
        <begin position="12"/>
        <end position="89"/>
    </location>
</feature>
<feature type="domain" description="UVR" evidence="1">
    <location>
        <begin position="194"/>
        <end position="229"/>
    </location>
</feature>
<comment type="function">
    <text evidence="1">The UvrABC repair system catalyzes the recognition and processing of DNA lesions. UvrC both incises the 5' and 3' sides of the lesion. The N-terminal half is responsible for the 3' incision and the C-terminal half is responsible for the 5' incision.</text>
</comment>
<comment type="subunit">
    <text evidence="1">Interacts with UvrB in an incision complex.</text>
</comment>
<comment type="subcellular location">
    <subcellularLocation>
        <location evidence="1">Cytoplasm</location>
    </subcellularLocation>
</comment>
<comment type="similarity">
    <text evidence="1">Belongs to the UvrC family.</text>
</comment>
<dbReference type="EMBL" id="AE017263">
    <property type="protein sequence ID" value="AAT75457.1"/>
    <property type="molecule type" value="Genomic_DNA"/>
</dbReference>
<dbReference type="RefSeq" id="WP_011182998.1">
    <property type="nucleotide sequence ID" value="NC_006055.1"/>
</dbReference>
<dbReference type="RefSeq" id="YP_053341.1">
    <property type="nucleotide sequence ID" value="NC_006055.1"/>
</dbReference>
<dbReference type="SMR" id="Q6F216"/>
<dbReference type="STRING" id="265311.Mfl101"/>
<dbReference type="PaxDb" id="265311-Mfl101"/>
<dbReference type="EnsemblBacteria" id="AAT75457">
    <property type="protein sequence ID" value="AAT75457"/>
    <property type="gene ID" value="Mfl101"/>
</dbReference>
<dbReference type="GeneID" id="2897800"/>
<dbReference type="KEGG" id="mfl:Mfl101"/>
<dbReference type="PATRIC" id="fig|265311.5.peg.102"/>
<dbReference type="eggNOG" id="COG0322">
    <property type="taxonomic scope" value="Bacteria"/>
</dbReference>
<dbReference type="HOGENOM" id="CLU_014841_3_2_14"/>
<dbReference type="OrthoDB" id="9804933at2"/>
<dbReference type="Proteomes" id="UP000006647">
    <property type="component" value="Chromosome"/>
</dbReference>
<dbReference type="GO" id="GO:0005737">
    <property type="term" value="C:cytoplasm"/>
    <property type="evidence" value="ECO:0007669"/>
    <property type="project" value="UniProtKB-SubCell"/>
</dbReference>
<dbReference type="GO" id="GO:0009380">
    <property type="term" value="C:excinuclease repair complex"/>
    <property type="evidence" value="ECO:0007669"/>
    <property type="project" value="InterPro"/>
</dbReference>
<dbReference type="GO" id="GO:0003677">
    <property type="term" value="F:DNA binding"/>
    <property type="evidence" value="ECO:0007669"/>
    <property type="project" value="UniProtKB-UniRule"/>
</dbReference>
<dbReference type="GO" id="GO:0009381">
    <property type="term" value="F:excinuclease ABC activity"/>
    <property type="evidence" value="ECO:0007669"/>
    <property type="project" value="UniProtKB-UniRule"/>
</dbReference>
<dbReference type="GO" id="GO:0006289">
    <property type="term" value="P:nucleotide-excision repair"/>
    <property type="evidence" value="ECO:0007669"/>
    <property type="project" value="UniProtKB-UniRule"/>
</dbReference>
<dbReference type="GO" id="GO:0009432">
    <property type="term" value="P:SOS response"/>
    <property type="evidence" value="ECO:0007669"/>
    <property type="project" value="UniProtKB-UniRule"/>
</dbReference>
<dbReference type="CDD" id="cd10434">
    <property type="entry name" value="GIY-YIG_UvrC_Cho"/>
    <property type="match status" value="1"/>
</dbReference>
<dbReference type="FunFam" id="3.40.1440.10:FF:000001">
    <property type="entry name" value="UvrABC system protein C"/>
    <property type="match status" value="1"/>
</dbReference>
<dbReference type="Gene3D" id="1.10.150.20">
    <property type="entry name" value="5' to 3' exonuclease, C-terminal subdomain"/>
    <property type="match status" value="1"/>
</dbReference>
<dbReference type="Gene3D" id="3.40.1440.10">
    <property type="entry name" value="GIY-YIG endonuclease"/>
    <property type="match status" value="1"/>
</dbReference>
<dbReference type="Gene3D" id="4.10.860.10">
    <property type="entry name" value="UVR domain"/>
    <property type="match status" value="1"/>
</dbReference>
<dbReference type="Gene3D" id="3.30.420.340">
    <property type="entry name" value="UvrC, RNAse H endonuclease domain"/>
    <property type="match status" value="1"/>
</dbReference>
<dbReference type="HAMAP" id="MF_00203">
    <property type="entry name" value="UvrC"/>
    <property type="match status" value="1"/>
</dbReference>
<dbReference type="InterPro" id="IPR000305">
    <property type="entry name" value="GIY-YIG_endonuc"/>
</dbReference>
<dbReference type="InterPro" id="IPR035901">
    <property type="entry name" value="GIY-YIG_endonuc_sf"/>
</dbReference>
<dbReference type="InterPro" id="IPR047296">
    <property type="entry name" value="GIY-YIG_UvrC_Cho"/>
</dbReference>
<dbReference type="InterPro" id="IPR010994">
    <property type="entry name" value="RuvA_2-like"/>
</dbReference>
<dbReference type="InterPro" id="IPR001943">
    <property type="entry name" value="UVR_dom"/>
</dbReference>
<dbReference type="InterPro" id="IPR036876">
    <property type="entry name" value="UVR_dom_sf"/>
</dbReference>
<dbReference type="InterPro" id="IPR050066">
    <property type="entry name" value="UvrABC_protein_C"/>
</dbReference>
<dbReference type="InterPro" id="IPR004791">
    <property type="entry name" value="UvrC"/>
</dbReference>
<dbReference type="InterPro" id="IPR001162">
    <property type="entry name" value="UvrC_RNase_H_dom"/>
</dbReference>
<dbReference type="InterPro" id="IPR038476">
    <property type="entry name" value="UvrC_RNase_H_dom_sf"/>
</dbReference>
<dbReference type="NCBIfam" id="TIGR00194">
    <property type="entry name" value="uvrC"/>
    <property type="match status" value="1"/>
</dbReference>
<dbReference type="PANTHER" id="PTHR30562:SF1">
    <property type="entry name" value="UVRABC SYSTEM PROTEIN C"/>
    <property type="match status" value="1"/>
</dbReference>
<dbReference type="PANTHER" id="PTHR30562">
    <property type="entry name" value="UVRC/OXIDOREDUCTASE"/>
    <property type="match status" value="1"/>
</dbReference>
<dbReference type="Pfam" id="PF01541">
    <property type="entry name" value="GIY-YIG"/>
    <property type="match status" value="1"/>
</dbReference>
<dbReference type="Pfam" id="PF02151">
    <property type="entry name" value="UVR"/>
    <property type="match status" value="1"/>
</dbReference>
<dbReference type="Pfam" id="PF22920">
    <property type="entry name" value="UvrC_RNaseH"/>
    <property type="match status" value="1"/>
</dbReference>
<dbReference type="Pfam" id="PF08459">
    <property type="entry name" value="UvrC_RNaseH_dom"/>
    <property type="match status" value="1"/>
</dbReference>
<dbReference type="SMART" id="SM00465">
    <property type="entry name" value="GIYc"/>
    <property type="match status" value="1"/>
</dbReference>
<dbReference type="SUPFAM" id="SSF46600">
    <property type="entry name" value="C-terminal UvrC-binding domain of UvrB"/>
    <property type="match status" value="1"/>
</dbReference>
<dbReference type="SUPFAM" id="SSF82771">
    <property type="entry name" value="GIY-YIG endonuclease"/>
    <property type="match status" value="1"/>
</dbReference>
<dbReference type="SUPFAM" id="SSF47781">
    <property type="entry name" value="RuvA domain 2-like"/>
    <property type="match status" value="1"/>
</dbReference>
<dbReference type="PROSITE" id="PS50164">
    <property type="entry name" value="GIY_YIG"/>
    <property type="match status" value="1"/>
</dbReference>
<dbReference type="PROSITE" id="PS50151">
    <property type="entry name" value="UVR"/>
    <property type="match status" value="1"/>
</dbReference>
<dbReference type="PROSITE" id="PS50165">
    <property type="entry name" value="UVRC"/>
    <property type="match status" value="1"/>
</dbReference>
<protein>
    <recommendedName>
        <fullName evidence="1">UvrABC system protein C</fullName>
        <shortName evidence="1">Protein UvrC</shortName>
    </recommendedName>
    <alternativeName>
        <fullName evidence="1">Excinuclease ABC subunit C</fullName>
    </alternativeName>
</protein>
<keyword id="KW-0963">Cytoplasm</keyword>
<keyword id="KW-0227">DNA damage</keyword>
<keyword id="KW-0228">DNA excision</keyword>
<keyword id="KW-0234">DNA repair</keyword>
<keyword id="KW-0267">Excision nuclease</keyword>
<keyword id="KW-1185">Reference proteome</keyword>
<keyword id="KW-0742">SOS response</keyword>